<feature type="chain" id="PRO_0000381412" description="Biotin synthase">
    <location>
        <begin position="1"/>
        <end position="363"/>
    </location>
</feature>
<feature type="domain" description="Radical SAM core" evidence="2">
    <location>
        <begin position="38"/>
        <end position="266"/>
    </location>
</feature>
<feature type="region of interest" description="Disordered" evidence="3">
    <location>
        <begin position="315"/>
        <end position="363"/>
    </location>
</feature>
<feature type="compositionally biased region" description="Basic and acidic residues" evidence="3">
    <location>
        <begin position="316"/>
        <end position="353"/>
    </location>
</feature>
<feature type="compositionally biased region" description="Polar residues" evidence="3">
    <location>
        <begin position="354"/>
        <end position="363"/>
    </location>
</feature>
<feature type="binding site" evidence="1">
    <location>
        <position position="53"/>
    </location>
    <ligand>
        <name>[4Fe-4S] cluster</name>
        <dbReference type="ChEBI" id="CHEBI:49883"/>
        <note>4Fe-4S-S-AdoMet</note>
    </ligand>
</feature>
<feature type="binding site" evidence="1">
    <location>
        <position position="57"/>
    </location>
    <ligand>
        <name>[4Fe-4S] cluster</name>
        <dbReference type="ChEBI" id="CHEBI:49883"/>
        <note>4Fe-4S-S-AdoMet</note>
    </ligand>
</feature>
<feature type="binding site" evidence="1">
    <location>
        <position position="60"/>
    </location>
    <ligand>
        <name>[4Fe-4S] cluster</name>
        <dbReference type="ChEBI" id="CHEBI:49883"/>
        <note>4Fe-4S-S-AdoMet</note>
    </ligand>
</feature>
<feature type="binding site" evidence="1">
    <location>
        <position position="97"/>
    </location>
    <ligand>
        <name>[2Fe-2S] cluster</name>
        <dbReference type="ChEBI" id="CHEBI:190135"/>
    </ligand>
</feature>
<feature type="binding site" evidence="1">
    <location>
        <position position="129"/>
    </location>
    <ligand>
        <name>[2Fe-2S] cluster</name>
        <dbReference type="ChEBI" id="CHEBI:190135"/>
    </ligand>
</feature>
<feature type="binding site" evidence="1">
    <location>
        <position position="189"/>
    </location>
    <ligand>
        <name>[2Fe-2S] cluster</name>
        <dbReference type="ChEBI" id="CHEBI:190135"/>
    </ligand>
</feature>
<feature type="binding site" evidence="1">
    <location>
        <position position="261"/>
    </location>
    <ligand>
        <name>[2Fe-2S] cluster</name>
        <dbReference type="ChEBI" id="CHEBI:190135"/>
    </ligand>
</feature>
<reference key="1">
    <citation type="journal article" date="2006" name="Environ. Microbiol.">
        <title>Whole genome analysis of the marine Bacteroidetes'Gramella forsetii' reveals adaptations to degradation of polymeric organic matter.</title>
        <authorList>
            <person name="Bauer M."/>
            <person name="Kube M."/>
            <person name="Teeling H."/>
            <person name="Richter M."/>
            <person name="Lombardot T."/>
            <person name="Allers E."/>
            <person name="Wuerdemann C.A."/>
            <person name="Quast C."/>
            <person name="Kuhl H."/>
            <person name="Knaust F."/>
            <person name="Woebken D."/>
            <person name="Bischof K."/>
            <person name="Mussmann M."/>
            <person name="Choudhuri J.V."/>
            <person name="Meyer F."/>
            <person name="Reinhardt R."/>
            <person name="Amann R.I."/>
            <person name="Gloeckner F.O."/>
        </authorList>
    </citation>
    <scope>NUCLEOTIDE SEQUENCE [LARGE SCALE GENOMIC DNA]</scope>
    <source>
        <strain>DSM 17595 / CGMCC 1.15422 / KT0803</strain>
    </source>
</reference>
<accession>A0M7A9</accession>
<name>BIOB_CHRFK</name>
<organism>
    <name type="scientific">Christiangramia forsetii (strain DSM 17595 / CGMCC 1.15422 / KT0803)</name>
    <name type="common">Gramella forsetii</name>
    <dbReference type="NCBI Taxonomy" id="411154"/>
    <lineage>
        <taxon>Bacteria</taxon>
        <taxon>Pseudomonadati</taxon>
        <taxon>Bacteroidota</taxon>
        <taxon>Flavobacteriia</taxon>
        <taxon>Flavobacteriales</taxon>
        <taxon>Flavobacteriaceae</taxon>
        <taxon>Christiangramia</taxon>
    </lineage>
</organism>
<sequence>MALKHDWTKEEILEIYNKPFMELLYDAATIHREHHDPNTVQVSTLLSIKTGGCPEDCGYCPQAARYHTDLEGNDLMSVNQVKAQALRAKASGSSRVCMGAAWRNVKDGEEFDNVLEMVRSINKLDMEVCCTLGMLTENQAQRLAEAGLYAYNHNLDSSEEYYKEVISTRGYQDRLDTIGNVRKTNVTVCSGGIIGMGESEADRAGMLVALSTLNPQPESVPINALVPVEGTPMEEQEPVPIWEMIRMVATTRIVMPETQVRLSAGRTQMSREGQAMCFFAGANSIFAGDKLLTTPNPDVSEDMEMFKMLGLNPQKAFEKKSQPESVAAEKSKYQSQGEKPRWSRPEHKIDRNLEAQQNAKTKA</sequence>
<evidence type="ECO:0000255" key="1">
    <source>
        <dbReference type="HAMAP-Rule" id="MF_01694"/>
    </source>
</evidence>
<evidence type="ECO:0000255" key="2">
    <source>
        <dbReference type="PROSITE-ProRule" id="PRU01266"/>
    </source>
</evidence>
<evidence type="ECO:0000256" key="3">
    <source>
        <dbReference type="SAM" id="MobiDB-lite"/>
    </source>
</evidence>
<keyword id="KW-0001">2Fe-2S</keyword>
<keyword id="KW-0004">4Fe-4S</keyword>
<keyword id="KW-0093">Biotin biosynthesis</keyword>
<keyword id="KW-0408">Iron</keyword>
<keyword id="KW-0411">Iron-sulfur</keyword>
<keyword id="KW-0479">Metal-binding</keyword>
<keyword id="KW-0949">S-adenosyl-L-methionine</keyword>
<keyword id="KW-0808">Transferase</keyword>
<gene>
    <name evidence="1" type="primary">bioB</name>
    <name type="ordered locus">GFO_3566</name>
</gene>
<dbReference type="EC" id="2.8.1.6" evidence="1"/>
<dbReference type="EMBL" id="CU207366">
    <property type="protein sequence ID" value="CAL68504.1"/>
    <property type="molecule type" value="Genomic_DNA"/>
</dbReference>
<dbReference type="RefSeq" id="WP_011711405.1">
    <property type="nucleotide sequence ID" value="NC_008571.1"/>
</dbReference>
<dbReference type="SMR" id="A0M7A9"/>
<dbReference type="STRING" id="411154.GFO_3566"/>
<dbReference type="KEGG" id="gfo:GFO_3566"/>
<dbReference type="eggNOG" id="COG0502">
    <property type="taxonomic scope" value="Bacteria"/>
</dbReference>
<dbReference type="HOGENOM" id="CLU_033172_1_2_10"/>
<dbReference type="OrthoDB" id="9786826at2"/>
<dbReference type="UniPathway" id="UPA00078">
    <property type="reaction ID" value="UER00162"/>
</dbReference>
<dbReference type="Proteomes" id="UP000000755">
    <property type="component" value="Chromosome"/>
</dbReference>
<dbReference type="GO" id="GO:0051537">
    <property type="term" value="F:2 iron, 2 sulfur cluster binding"/>
    <property type="evidence" value="ECO:0007669"/>
    <property type="project" value="UniProtKB-KW"/>
</dbReference>
<dbReference type="GO" id="GO:0051539">
    <property type="term" value="F:4 iron, 4 sulfur cluster binding"/>
    <property type="evidence" value="ECO:0007669"/>
    <property type="project" value="UniProtKB-KW"/>
</dbReference>
<dbReference type="GO" id="GO:0004076">
    <property type="term" value="F:biotin synthase activity"/>
    <property type="evidence" value="ECO:0007669"/>
    <property type="project" value="UniProtKB-UniRule"/>
</dbReference>
<dbReference type="GO" id="GO:0005506">
    <property type="term" value="F:iron ion binding"/>
    <property type="evidence" value="ECO:0007669"/>
    <property type="project" value="UniProtKB-UniRule"/>
</dbReference>
<dbReference type="GO" id="GO:0009102">
    <property type="term" value="P:biotin biosynthetic process"/>
    <property type="evidence" value="ECO:0007669"/>
    <property type="project" value="UniProtKB-UniRule"/>
</dbReference>
<dbReference type="CDD" id="cd01335">
    <property type="entry name" value="Radical_SAM"/>
    <property type="match status" value="1"/>
</dbReference>
<dbReference type="FunFam" id="3.20.20.70:FF:000011">
    <property type="entry name" value="Biotin synthase"/>
    <property type="match status" value="1"/>
</dbReference>
<dbReference type="Gene3D" id="3.20.20.70">
    <property type="entry name" value="Aldolase class I"/>
    <property type="match status" value="1"/>
</dbReference>
<dbReference type="HAMAP" id="MF_01694">
    <property type="entry name" value="BioB"/>
    <property type="match status" value="1"/>
</dbReference>
<dbReference type="InterPro" id="IPR013785">
    <property type="entry name" value="Aldolase_TIM"/>
</dbReference>
<dbReference type="InterPro" id="IPR010722">
    <property type="entry name" value="BATS_dom"/>
</dbReference>
<dbReference type="InterPro" id="IPR002684">
    <property type="entry name" value="Biotin_synth/BioAB"/>
</dbReference>
<dbReference type="InterPro" id="IPR024177">
    <property type="entry name" value="Biotin_synthase"/>
</dbReference>
<dbReference type="InterPro" id="IPR006638">
    <property type="entry name" value="Elp3/MiaA/NifB-like_rSAM"/>
</dbReference>
<dbReference type="InterPro" id="IPR007197">
    <property type="entry name" value="rSAM"/>
</dbReference>
<dbReference type="NCBIfam" id="TIGR00433">
    <property type="entry name" value="bioB"/>
    <property type="match status" value="1"/>
</dbReference>
<dbReference type="PANTHER" id="PTHR22976">
    <property type="entry name" value="BIOTIN SYNTHASE"/>
    <property type="match status" value="1"/>
</dbReference>
<dbReference type="PANTHER" id="PTHR22976:SF2">
    <property type="entry name" value="BIOTIN SYNTHASE, MITOCHONDRIAL"/>
    <property type="match status" value="1"/>
</dbReference>
<dbReference type="Pfam" id="PF06968">
    <property type="entry name" value="BATS"/>
    <property type="match status" value="1"/>
</dbReference>
<dbReference type="Pfam" id="PF04055">
    <property type="entry name" value="Radical_SAM"/>
    <property type="match status" value="1"/>
</dbReference>
<dbReference type="PIRSF" id="PIRSF001619">
    <property type="entry name" value="Biotin_synth"/>
    <property type="match status" value="1"/>
</dbReference>
<dbReference type="SFLD" id="SFLDF00272">
    <property type="entry name" value="biotin_synthase"/>
    <property type="match status" value="1"/>
</dbReference>
<dbReference type="SFLD" id="SFLDS00029">
    <property type="entry name" value="Radical_SAM"/>
    <property type="match status" value="1"/>
</dbReference>
<dbReference type="SMART" id="SM00876">
    <property type="entry name" value="BATS"/>
    <property type="match status" value="1"/>
</dbReference>
<dbReference type="SMART" id="SM00729">
    <property type="entry name" value="Elp3"/>
    <property type="match status" value="1"/>
</dbReference>
<dbReference type="SUPFAM" id="SSF102114">
    <property type="entry name" value="Radical SAM enzymes"/>
    <property type="match status" value="1"/>
</dbReference>
<dbReference type="PROSITE" id="PS51918">
    <property type="entry name" value="RADICAL_SAM"/>
    <property type="match status" value="1"/>
</dbReference>
<protein>
    <recommendedName>
        <fullName evidence="1">Biotin synthase</fullName>
        <ecNumber evidence="1">2.8.1.6</ecNumber>
    </recommendedName>
</protein>
<comment type="function">
    <text evidence="1">Catalyzes the conversion of dethiobiotin (DTB) to biotin by the insertion of a sulfur atom into dethiobiotin via a radical-based mechanism.</text>
</comment>
<comment type="catalytic activity">
    <reaction evidence="1">
        <text>(4R,5S)-dethiobiotin + (sulfur carrier)-SH + 2 reduced [2Fe-2S]-[ferredoxin] + 2 S-adenosyl-L-methionine = (sulfur carrier)-H + biotin + 2 5'-deoxyadenosine + 2 L-methionine + 2 oxidized [2Fe-2S]-[ferredoxin]</text>
        <dbReference type="Rhea" id="RHEA:22060"/>
        <dbReference type="Rhea" id="RHEA-COMP:10000"/>
        <dbReference type="Rhea" id="RHEA-COMP:10001"/>
        <dbReference type="Rhea" id="RHEA-COMP:14737"/>
        <dbReference type="Rhea" id="RHEA-COMP:14739"/>
        <dbReference type="ChEBI" id="CHEBI:17319"/>
        <dbReference type="ChEBI" id="CHEBI:29917"/>
        <dbReference type="ChEBI" id="CHEBI:33737"/>
        <dbReference type="ChEBI" id="CHEBI:33738"/>
        <dbReference type="ChEBI" id="CHEBI:57586"/>
        <dbReference type="ChEBI" id="CHEBI:57844"/>
        <dbReference type="ChEBI" id="CHEBI:59789"/>
        <dbReference type="ChEBI" id="CHEBI:64428"/>
        <dbReference type="ChEBI" id="CHEBI:149473"/>
        <dbReference type="EC" id="2.8.1.6"/>
    </reaction>
</comment>
<comment type="cofactor">
    <cofactor evidence="1">
        <name>[4Fe-4S] cluster</name>
        <dbReference type="ChEBI" id="CHEBI:49883"/>
    </cofactor>
    <text evidence="1">Binds 1 [4Fe-4S] cluster. The cluster is coordinated with 3 cysteines and an exchangeable S-adenosyl-L-methionine.</text>
</comment>
<comment type="cofactor">
    <cofactor evidence="1">
        <name>[2Fe-2S] cluster</name>
        <dbReference type="ChEBI" id="CHEBI:190135"/>
    </cofactor>
    <text evidence="1">Binds 1 [2Fe-2S] cluster. The cluster is coordinated with 3 cysteines and 1 arginine.</text>
</comment>
<comment type="pathway">
    <text evidence="1">Cofactor biosynthesis; biotin biosynthesis; biotin from 7,8-diaminononanoate: step 2/2.</text>
</comment>
<comment type="subunit">
    <text evidence="1">Homodimer.</text>
</comment>
<comment type="similarity">
    <text evidence="1">Belongs to the radical SAM superfamily. Biotin synthase family.</text>
</comment>
<proteinExistence type="inferred from homology"/>